<organism>
    <name type="scientific">Caldanaerobacter subterraneus subsp. tengcongensis (strain DSM 15242 / JCM 11007 / NBRC 100824 / MB4)</name>
    <name type="common">Thermoanaerobacter tengcongensis</name>
    <dbReference type="NCBI Taxonomy" id="273068"/>
    <lineage>
        <taxon>Bacteria</taxon>
        <taxon>Bacillati</taxon>
        <taxon>Bacillota</taxon>
        <taxon>Clostridia</taxon>
        <taxon>Thermoanaerobacterales</taxon>
        <taxon>Thermoanaerobacteraceae</taxon>
        <taxon>Caldanaerobacter</taxon>
    </lineage>
</organism>
<reference key="1">
    <citation type="journal article" date="2002" name="Genome Res.">
        <title>A complete sequence of the T. tengcongensis genome.</title>
        <authorList>
            <person name="Bao Q."/>
            <person name="Tian Y."/>
            <person name="Li W."/>
            <person name="Xu Z."/>
            <person name="Xuan Z."/>
            <person name="Hu S."/>
            <person name="Dong W."/>
            <person name="Yang J."/>
            <person name="Chen Y."/>
            <person name="Xue Y."/>
            <person name="Xu Y."/>
            <person name="Lai X."/>
            <person name="Huang L."/>
            <person name="Dong X."/>
            <person name="Ma Y."/>
            <person name="Ling L."/>
            <person name="Tan H."/>
            <person name="Chen R."/>
            <person name="Wang J."/>
            <person name="Yu J."/>
            <person name="Yang H."/>
        </authorList>
    </citation>
    <scope>NUCLEOTIDE SEQUENCE [LARGE SCALE GENOMIC DNA]</scope>
    <source>
        <strain>DSM 15242 / JCM 11007 / NBRC 100824 / MB4</strain>
    </source>
</reference>
<comment type="catalytic activity">
    <reaction evidence="1">
        <text>butanoate + ATP = butanoyl phosphate + ADP</text>
        <dbReference type="Rhea" id="RHEA:13585"/>
        <dbReference type="ChEBI" id="CHEBI:17968"/>
        <dbReference type="ChEBI" id="CHEBI:30616"/>
        <dbReference type="ChEBI" id="CHEBI:58079"/>
        <dbReference type="ChEBI" id="CHEBI:456216"/>
        <dbReference type="EC" id="2.7.2.7"/>
    </reaction>
</comment>
<comment type="subcellular location">
    <subcellularLocation>
        <location evidence="1">Cytoplasm</location>
    </subcellularLocation>
</comment>
<comment type="similarity">
    <text evidence="1">Belongs to the acetokinase family.</text>
</comment>
<dbReference type="EC" id="2.7.2.7" evidence="1"/>
<dbReference type="EMBL" id="AE008691">
    <property type="protein sequence ID" value="AAM25360.1"/>
    <property type="molecule type" value="Genomic_DNA"/>
</dbReference>
<dbReference type="RefSeq" id="WP_009610633.1">
    <property type="nucleotide sequence ID" value="NC_003869.1"/>
</dbReference>
<dbReference type="SMR" id="Q8R828"/>
<dbReference type="STRING" id="273068.TTE2205"/>
<dbReference type="KEGG" id="tte:TTE2205"/>
<dbReference type="eggNOG" id="COG3426">
    <property type="taxonomic scope" value="Bacteria"/>
</dbReference>
<dbReference type="HOGENOM" id="CLU_048716_0_0_9"/>
<dbReference type="OrthoDB" id="9771859at2"/>
<dbReference type="Proteomes" id="UP000000555">
    <property type="component" value="Chromosome"/>
</dbReference>
<dbReference type="GO" id="GO:0005737">
    <property type="term" value="C:cytoplasm"/>
    <property type="evidence" value="ECO:0007669"/>
    <property type="project" value="UniProtKB-SubCell"/>
</dbReference>
<dbReference type="GO" id="GO:0008776">
    <property type="term" value="F:acetate kinase activity"/>
    <property type="evidence" value="ECO:0007669"/>
    <property type="project" value="TreeGrafter"/>
</dbReference>
<dbReference type="GO" id="GO:0005524">
    <property type="term" value="F:ATP binding"/>
    <property type="evidence" value="ECO:0007669"/>
    <property type="project" value="UniProtKB-KW"/>
</dbReference>
<dbReference type="GO" id="GO:0047761">
    <property type="term" value="F:butyrate kinase activity"/>
    <property type="evidence" value="ECO:0007669"/>
    <property type="project" value="UniProtKB-UniRule"/>
</dbReference>
<dbReference type="GO" id="GO:0006083">
    <property type="term" value="P:acetate metabolic process"/>
    <property type="evidence" value="ECO:0007669"/>
    <property type="project" value="TreeGrafter"/>
</dbReference>
<dbReference type="CDD" id="cd24011">
    <property type="entry name" value="ASKHA_NBD_BK"/>
    <property type="match status" value="1"/>
</dbReference>
<dbReference type="Gene3D" id="3.30.420.40">
    <property type="match status" value="2"/>
</dbReference>
<dbReference type="HAMAP" id="MF_00542">
    <property type="entry name" value="Butyrate_kinase"/>
    <property type="match status" value="1"/>
</dbReference>
<dbReference type="InterPro" id="IPR000890">
    <property type="entry name" value="Aliphatic_acid_kin_short-chain"/>
</dbReference>
<dbReference type="InterPro" id="IPR023865">
    <property type="entry name" value="Aliphatic_acid_kinase_CS"/>
</dbReference>
<dbReference type="InterPro" id="IPR043129">
    <property type="entry name" value="ATPase_NBD"/>
</dbReference>
<dbReference type="InterPro" id="IPR011245">
    <property type="entry name" value="Butyrate_kin"/>
</dbReference>
<dbReference type="NCBIfam" id="TIGR02707">
    <property type="entry name" value="butyr_kinase"/>
    <property type="match status" value="1"/>
</dbReference>
<dbReference type="NCBIfam" id="NF002834">
    <property type="entry name" value="PRK03011.1-5"/>
    <property type="match status" value="1"/>
</dbReference>
<dbReference type="PANTHER" id="PTHR21060">
    <property type="entry name" value="ACETATE KINASE"/>
    <property type="match status" value="1"/>
</dbReference>
<dbReference type="PANTHER" id="PTHR21060:SF3">
    <property type="entry name" value="BUTYRATE KINASE 2-RELATED"/>
    <property type="match status" value="1"/>
</dbReference>
<dbReference type="Pfam" id="PF00871">
    <property type="entry name" value="Acetate_kinase"/>
    <property type="match status" value="1"/>
</dbReference>
<dbReference type="PIRSF" id="PIRSF036458">
    <property type="entry name" value="Butyrate_kin"/>
    <property type="match status" value="1"/>
</dbReference>
<dbReference type="PRINTS" id="PR00471">
    <property type="entry name" value="ACETATEKNASE"/>
</dbReference>
<dbReference type="SUPFAM" id="SSF53067">
    <property type="entry name" value="Actin-like ATPase domain"/>
    <property type="match status" value="2"/>
</dbReference>
<dbReference type="PROSITE" id="PS01075">
    <property type="entry name" value="ACETATE_KINASE_1"/>
    <property type="match status" value="1"/>
</dbReference>
<dbReference type="PROSITE" id="PS01076">
    <property type="entry name" value="ACETATE_KINASE_2"/>
    <property type="match status" value="1"/>
</dbReference>
<proteinExistence type="inferred from homology"/>
<evidence type="ECO:0000255" key="1">
    <source>
        <dbReference type="HAMAP-Rule" id="MF_00542"/>
    </source>
</evidence>
<protein>
    <recommendedName>
        <fullName evidence="1">Probable butyrate kinase 2</fullName>
        <shortName evidence="1">BK 2</shortName>
        <ecNumber evidence="1">2.7.2.7</ecNumber>
    </recommendedName>
    <alternativeName>
        <fullName evidence="1">Branched-chain carboxylic acid kinase 2</fullName>
    </alternativeName>
</protein>
<accession>Q8R828</accession>
<name>BUK2_CALS4</name>
<keyword id="KW-0067">ATP-binding</keyword>
<keyword id="KW-0963">Cytoplasm</keyword>
<keyword id="KW-0418">Kinase</keyword>
<keyword id="KW-0547">Nucleotide-binding</keyword>
<keyword id="KW-1185">Reference proteome</keyword>
<keyword id="KW-0808">Transferase</keyword>
<sequence>MFKVLVINPGSTSTKVALYEDEKEIVRSDITHDVETLKNYKSVIEQLDLRLEAINKWLSENGIKVLELSAIVVRGGLIKPVQSGTYVVNDIMLEDLRKGVGGEHPSNLGGIIGRALADPYGIPVYTLDPVAVDEMEDVARISGLPELPRKSQSHALNIKACIHRYARENNLKEEELNMIVAHMGGGISVAAIKGGRIVDVNNANQMGPFSPERTGSLPSMKVVEMCYSGKYTLEEMKKKIVGMGGLVAHLGTNDAREVVKRIEAGDKKAKLVFEAMAYQIAKEIGRMAAVLKGDVKTIILTGGLAYSKPLIEIIIDMVGFIAPITLYPGGDEMEALRDGALRVLRGQETPKIYG</sequence>
<gene>
    <name evidence="1" type="primary">buk2</name>
    <name type="ordered locus">TTE2205</name>
</gene>
<feature type="chain" id="PRO_0000107677" description="Probable butyrate kinase 2">
    <location>
        <begin position="1"/>
        <end position="354"/>
    </location>
</feature>